<name>SYE_UREP2</name>
<sequence length="482" mass="55909">MKIRTRYAPSPTGYLHIGGARTALFNYLLAKAYGGDFIIRIEDTDIERNVEGGINSQLDFLAWMGIIPDESIRNPKAFGPYIQSEKLKHYEKLALDLVDQKKAYFCFCSKEQLDADRELAEKSHQTPKYKRHCLNLDKKTIESNLLQNKEYTIRLKINENMEYSWDDLIRGKISIPGSALTDPVILKSNKIAMYNFAVVIDDYEMQISHVIRGEEHISNTPYQLAIAQALNYDITKIKYGHLSIIVDETGKKLSKRNLSLKQFVSDYEKDGYWPHAITNFVALLGWSPKNNDEIMSLETMIKNFDINNLSKSPAFFDINKMNWFSTQYFNNITQEEFINFIKKHSLTKELVLNDYTFINKCLLFKSHIINLKQLIDLVIEQFNCDKKVLASDVDYIKKNQLITVVRVFYEQLIINDEFNEEFIKEIIKKVQIITNNKGANLYMPIRIATTFSSHGPELAKTICYLGREKVLKNLINILKILD</sequence>
<feature type="chain" id="PRO_1000074340" description="Glutamate--tRNA ligase">
    <location>
        <begin position="1"/>
        <end position="482"/>
    </location>
</feature>
<feature type="short sequence motif" description="'HIGH' region" evidence="1">
    <location>
        <begin position="9"/>
        <end position="19"/>
    </location>
</feature>
<feature type="short sequence motif" description="'KMSKS' region" evidence="1">
    <location>
        <begin position="252"/>
        <end position="256"/>
    </location>
</feature>
<feature type="binding site" evidence="1">
    <location>
        <position position="255"/>
    </location>
    <ligand>
        <name>ATP</name>
        <dbReference type="ChEBI" id="CHEBI:30616"/>
    </ligand>
</feature>
<gene>
    <name evidence="1" type="primary">gltX</name>
    <name type="ordered locus">UPA3_0639</name>
</gene>
<dbReference type="EC" id="6.1.1.17" evidence="1"/>
<dbReference type="EMBL" id="CP000942">
    <property type="protein sequence ID" value="ACA32816.1"/>
    <property type="molecule type" value="Genomic_DNA"/>
</dbReference>
<dbReference type="RefSeq" id="WP_006688453.1">
    <property type="nucleotide sequence ID" value="NC_010503.1"/>
</dbReference>
<dbReference type="SMR" id="B1AJP0"/>
<dbReference type="GeneID" id="29672199"/>
<dbReference type="KEGG" id="upa:UPA3_0639"/>
<dbReference type="HOGENOM" id="CLU_015768_6_1_14"/>
<dbReference type="Proteomes" id="UP000002162">
    <property type="component" value="Chromosome"/>
</dbReference>
<dbReference type="GO" id="GO:0005829">
    <property type="term" value="C:cytosol"/>
    <property type="evidence" value="ECO:0007669"/>
    <property type="project" value="TreeGrafter"/>
</dbReference>
<dbReference type="GO" id="GO:0005524">
    <property type="term" value="F:ATP binding"/>
    <property type="evidence" value="ECO:0007669"/>
    <property type="project" value="UniProtKB-UniRule"/>
</dbReference>
<dbReference type="GO" id="GO:0004818">
    <property type="term" value="F:glutamate-tRNA ligase activity"/>
    <property type="evidence" value="ECO:0007669"/>
    <property type="project" value="UniProtKB-UniRule"/>
</dbReference>
<dbReference type="GO" id="GO:0000049">
    <property type="term" value="F:tRNA binding"/>
    <property type="evidence" value="ECO:0007669"/>
    <property type="project" value="InterPro"/>
</dbReference>
<dbReference type="GO" id="GO:0008270">
    <property type="term" value="F:zinc ion binding"/>
    <property type="evidence" value="ECO:0007669"/>
    <property type="project" value="InterPro"/>
</dbReference>
<dbReference type="GO" id="GO:0006424">
    <property type="term" value="P:glutamyl-tRNA aminoacylation"/>
    <property type="evidence" value="ECO:0007669"/>
    <property type="project" value="UniProtKB-UniRule"/>
</dbReference>
<dbReference type="CDD" id="cd00808">
    <property type="entry name" value="GluRS_core"/>
    <property type="match status" value="1"/>
</dbReference>
<dbReference type="FunFam" id="3.40.50.620:FF:000007">
    <property type="entry name" value="Glutamate--tRNA ligase"/>
    <property type="match status" value="1"/>
</dbReference>
<dbReference type="Gene3D" id="1.10.10.350">
    <property type="match status" value="1"/>
</dbReference>
<dbReference type="Gene3D" id="3.40.50.620">
    <property type="entry name" value="HUPs"/>
    <property type="match status" value="1"/>
</dbReference>
<dbReference type="HAMAP" id="MF_00022">
    <property type="entry name" value="Glu_tRNA_synth_type1"/>
    <property type="match status" value="1"/>
</dbReference>
<dbReference type="InterPro" id="IPR045462">
    <property type="entry name" value="aa-tRNA-synth_I_cd-bd"/>
</dbReference>
<dbReference type="InterPro" id="IPR020751">
    <property type="entry name" value="aa-tRNA-synth_I_codon-bd_sub2"/>
</dbReference>
<dbReference type="InterPro" id="IPR001412">
    <property type="entry name" value="aa-tRNA-synth_I_CS"/>
</dbReference>
<dbReference type="InterPro" id="IPR008925">
    <property type="entry name" value="aa_tRNA-synth_I_cd-bd_sf"/>
</dbReference>
<dbReference type="InterPro" id="IPR004527">
    <property type="entry name" value="Glu-tRNA-ligase_bac/mito"/>
</dbReference>
<dbReference type="InterPro" id="IPR000924">
    <property type="entry name" value="Glu/Gln-tRNA-synth"/>
</dbReference>
<dbReference type="InterPro" id="IPR020058">
    <property type="entry name" value="Glu/Gln-tRNA-synth_Ib_cat-dom"/>
</dbReference>
<dbReference type="InterPro" id="IPR049940">
    <property type="entry name" value="GluQ/Sye"/>
</dbReference>
<dbReference type="InterPro" id="IPR033910">
    <property type="entry name" value="GluRS_core"/>
</dbReference>
<dbReference type="InterPro" id="IPR014729">
    <property type="entry name" value="Rossmann-like_a/b/a_fold"/>
</dbReference>
<dbReference type="NCBIfam" id="TIGR00464">
    <property type="entry name" value="gltX_bact"/>
    <property type="match status" value="1"/>
</dbReference>
<dbReference type="PANTHER" id="PTHR43311">
    <property type="entry name" value="GLUTAMATE--TRNA LIGASE"/>
    <property type="match status" value="1"/>
</dbReference>
<dbReference type="PANTHER" id="PTHR43311:SF2">
    <property type="entry name" value="GLUTAMATE--TRNA LIGASE, MITOCHONDRIAL-RELATED"/>
    <property type="match status" value="1"/>
</dbReference>
<dbReference type="Pfam" id="PF19269">
    <property type="entry name" value="Anticodon_2"/>
    <property type="match status" value="1"/>
</dbReference>
<dbReference type="Pfam" id="PF00749">
    <property type="entry name" value="tRNA-synt_1c"/>
    <property type="match status" value="1"/>
</dbReference>
<dbReference type="PRINTS" id="PR00987">
    <property type="entry name" value="TRNASYNTHGLU"/>
</dbReference>
<dbReference type="SUPFAM" id="SSF48163">
    <property type="entry name" value="An anticodon-binding domain of class I aminoacyl-tRNA synthetases"/>
    <property type="match status" value="1"/>
</dbReference>
<dbReference type="SUPFAM" id="SSF52374">
    <property type="entry name" value="Nucleotidylyl transferase"/>
    <property type="match status" value="1"/>
</dbReference>
<dbReference type="PROSITE" id="PS00178">
    <property type="entry name" value="AA_TRNA_LIGASE_I"/>
    <property type="match status" value="1"/>
</dbReference>
<proteinExistence type="inferred from homology"/>
<organism>
    <name type="scientific">Ureaplasma parvum serovar 3 (strain ATCC 27815 / 27 / NCTC 11736)</name>
    <dbReference type="NCBI Taxonomy" id="505682"/>
    <lineage>
        <taxon>Bacteria</taxon>
        <taxon>Bacillati</taxon>
        <taxon>Mycoplasmatota</taxon>
        <taxon>Mycoplasmoidales</taxon>
        <taxon>Mycoplasmoidaceae</taxon>
        <taxon>Ureaplasma</taxon>
    </lineage>
</organism>
<accession>B1AJP0</accession>
<keyword id="KW-0030">Aminoacyl-tRNA synthetase</keyword>
<keyword id="KW-0067">ATP-binding</keyword>
<keyword id="KW-0963">Cytoplasm</keyword>
<keyword id="KW-0436">Ligase</keyword>
<keyword id="KW-0547">Nucleotide-binding</keyword>
<keyword id="KW-0648">Protein biosynthesis</keyword>
<reference key="1">
    <citation type="submission" date="2008-02" db="EMBL/GenBank/DDBJ databases">
        <title>Genome sequence of Ureaplasma parvum serovar 3.</title>
        <authorList>
            <person name="Methe B.A."/>
            <person name="Glass J."/>
            <person name="Waites K."/>
            <person name="Shrivastava S."/>
        </authorList>
    </citation>
    <scope>NUCLEOTIDE SEQUENCE [LARGE SCALE GENOMIC DNA]</scope>
    <source>
        <strain>ATCC 27815 / 27 / NCTC 11736</strain>
    </source>
</reference>
<comment type="function">
    <text evidence="1">Catalyzes the attachment of glutamate to tRNA(Glu) in a two-step reaction: glutamate is first activated by ATP to form Glu-AMP and then transferred to the acceptor end of tRNA(Glu).</text>
</comment>
<comment type="catalytic activity">
    <reaction evidence="1">
        <text>tRNA(Glu) + L-glutamate + ATP = L-glutamyl-tRNA(Glu) + AMP + diphosphate</text>
        <dbReference type="Rhea" id="RHEA:23540"/>
        <dbReference type="Rhea" id="RHEA-COMP:9663"/>
        <dbReference type="Rhea" id="RHEA-COMP:9680"/>
        <dbReference type="ChEBI" id="CHEBI:29985"/>
        <dbReference type="ChEBI" id="CHEBI:30616"/>
        <dbReference type="ChEBI" id="CHEBI:33019"/>
        <dbReference type="ChEBI" id="CHEBI:78442"/>
        <dbReference type="ChEBI" id="CHEBI:78520"/>
        <dbReference type="ChEBI" id="CHEBI:456215"/>
        <dbReference type="EC" id="6.1.1.17"/>
    </reaction>
</comment>
<comment type="subunit">
    <text evidence="1">Monomer.</text>
</comment>
<comment type="subcellular location">
    <subcellularLocation>
        <location evidence="1">Cytoplasm</location>
    </subcellularLocation>
</comment>
<comment type="similarity">
    <text evidence="1">Belongs to the class-I aminoacyl-tRNA synthetase family. Glutamate--tRNA ligase type 1 subfamily.</text>
</comment>
<evidence type="ECO:0000255" key="1">
    <source>
        <dbReference type="HAMAP-Rule" id="MF_00022"/>
    </source>
</evidence>
<protein>
    <recommendedName>
        <fullName evidence="1">Glutamate--tRNA ligase</fullName>
        <ecNumber evidence="1">6.1.1.17</ecNumber>
    </recommendedName>
    <alternativeName>
        <fullName evidence="1">Glutamyl-tRNA synthetase</fullName>
        <shortName evidence="1">GluRS</shortName>
    </alternativeName>
</protein>